<gene>
    <name evidence="1" type="primary">rimO</name>
    <name type="ordered locus">SPAB_02645</name>
</gene>
<name>RIMO_SALPB</name>
<comment type="function">
    <text evidence="1">Catalyzes the methylthiolation of an aspartic acid residue of ribosomal protein uS12.</text>
</comment>
<comment type="catalytic activity">
    <reaction evidence="1">
        <text>L-aspartate(89)-[ribosomal protein uS12]-hydrogen + (sulfur carrier)-SH + AH2 + 2 S-adenosyl-L-methionine = 3-methylsulfanyl-L-aspartate(89)-[ribosomal protein uS12]-hydrogen + (sulfur carrier)-H + 5'-deoxyadenosine + L-methionine + A + S-adenosyl-L-homocysteine + 2 H(+)</text>
        <dbReference type="Rhea" id="RHEA:37087"/>
        <dbReference type="Rhea" id="RHEA-COMP:10460"/>
        <dbReference type="Rhea" id="RHEA-COMP:10461"/>
        <dbReference type="Rhea" id="RHEA-COMP:14737"/>
        <dbReference type="Rhea" id="RHEA-COMP:14739"/>
        <dbReference type="ChEBI" id="CHEBI:13193"/>
        <dbReference type="ChEBI" id="CHEBI:15378"/>
        <dbReference type="ChEBI" id="CHEBI:17319"/>
        <dbReference type="ChEBI" id="CHEBI:17499"/>
        <dbReference type="ChEBI" id="CHEBI:29917"/>
        <dbReference type="ChEBI" id="CHEBI:29961"/>
        <dbReference type="ChEBI" id="CHEBI:57844"/>
        <dbReference type="ChEBI" id="CHEBI:57856"/>
        <dbReference type="ChEBI" id="CHEBI:59789"/>
        <dbReference type="ChEBI" id="CHEBI:64428"/>
        <dbReference type="ChEBI" id="CHEBI:73599"/>
        <dbReference type="EC" id="2.8.4.4"/>
    </reaction>
</comment>
<comment type="cofactor">
    <cofactor evidence="1">
        <name>[4Fe-4S] cluster</name>
        <dbReference type="ChEBI" id="CHEBI:49883"/>
    </cofactor>
    <text evidence="1">Binds 2 [4Fe-4S] clusters. One cluster is coordinated with 3 cysteines and an exchangeable S-adenosyl-L-methionine.</text>
</comment>
<comment type="subcellular location">
    <subcellularLocation>
        <location evidence="1">Cytoplasm</location>
    </subcellularLocation>
</comment>
<comment type="similarity">
    <text evidence="1">Belongs to the methylthiotransferase family. RimO subfamily.</text>
</comment>
<feature type="chain" id="PRO_0000374995" description="Ribosomal protein uS12 methylthiotransferase RimO">
    <location>
        <begin position="1"/>
        <end position="441"/>
    </location>
</feature>
<feature type="domain" description="MTTase N-terminal" evidence="1">
    <location>
        <begin position="8"/>
        <end position="118"/>
    </location>
</feature>
<feature type="domain" description="Radical SAM core" evidence="2">
    <location>
        <begin position="136"/>
        <end position="373"/>
    </location>
</feature>
<feature type="domain" description="TRAM" evidence="1">
    <location>
        <begin position="376"/>
        <end position="441"/>
    </location>
</feature>
<feature type="binding site" evidence="1">
    <location>
        <position position="17"/>
    </location>
    <ligand>
        <name>[4Fe-4S] cluster</name>
        <dbReference type="ChEBI" id="CHEBI:49883"/>
        <label>1</label>
    </ligand>
</feature>
<feature type="binding site" evidence="1">
    <location>
        <position position="53"/>
    </location>
    <ligand>
        <name>[4Fe-4S] cluster</name>
        <dbReference type="ChEBI" id="CHEBI:49883"/>
        <label>1</label>
    </ligand>
</feature>
<feature type="binding site" evidence="1">
    <location>
        <position position="82"/>
    </location>
    <ligand>
        <name>[4Fe-4S] cluster</name>
        <dbReference type="ChEBI" id="CHEBI:49883"/>
        <label>1</label>
    </ligand>
</feature>
<feature type="binding site" evidence="1">
    <location>
        <position position="150"/>
    </location>
    <ligand>
        <name>[4Fe-4S] cluster</name>
        <dbReference type="ChEBI" id="CHEBI:49883"/>
        <label>2</label>
        <note>4Fe-4S-S-AdoMet</note>
    </ligand>
</feature>
<feature type="binding site" evidence="1">
    <location>
        <position position="154"/>
    </location>
    <ligand>
        <name>[4Fe-4S] cluster</name>
        <dbReference type="ChEBI" id="CHEBI:49883"/>
        <label>2</label>
        <note>4Fe-4S-S-AdoMet</note>
    </ligand>
</feature>
<feature type="binding site" evidence="1">
    <location>
        <position position="157"/>
    </location>
    <ligand>
        <name>[4Fe-4S] cluster</name>
        <dbReference type="ChEBI" id="CHEBI:49883"/>
        <label>2</label>
        <note>4Fe-4S-S-AdoMet</note>
    </ligand>
</feature>
<proteinExistence type="inferred from homology"/>
<sequence>MSNVTHQPKIGFVSLGCPKNLVDSERILTELRTEGYDVVPRYDDADMVIVNTCGFIDSAVQESLEAIGEALNENGKVIVTGCLGAKEDQIREVHPKVLEITGPHSYEQVLQHVHHYVPKPKHNPFLSLVPEQDVKLTPRHYAYLKISEGCNHRCTFCIIPSMRGDLVSRPIGDVLSEAKRLVDAGVKEILVISQDTSAYGVDVKHRTGFHNGEPVKTSMVSLCEQLSKLGVWTRLHYVYPYPHVDDVIPLMAEGKILPYLDIPLQHASPRILKLMKRPGSVDRQLARIKQWREICPELTLRSTFIVGFPGETEEDFQMLLDFLKEARLDRVGCFKYSPVEGAGANDLPDQVPEEVKEERWNRFMQLQQQISAERLQEKVGREILVIVDEVDEEGAIGRSMADAPEIDGAVYLNGETNVKPGDIVRVKVENADEYDLWGSRV</sequence>
<protein>
    <recommendedName>
        <fullName evidence="1">Ribosomal protein uS12 methylthiotransferase RimO</fullName>
        <shortName evidence="1">uS12 MTTase</shortName>
        <shortName evidence="1">uS12 methylthiotransferase</shortName>
        <ecNumber evidence="1">2.8.4.4</ecNumber>
    </recommendedName>
    <alternativeName>
        <fullName evidence="1">Ribosomal protein uS12 (aspartate-C(3))-methylthiotransferase</fullName>
    </alternativeName>
    <alternativeName>
        <fullName evidence="1">Ribosome maturation factor RimO</fullName>
    </alternativeName>
</protein>
<reference key="1">
    <citation type="submission" date="2007-11" db="EMBL/GenBank/DDBJ databases">
        <authorList>
            <consortium name="The Salmonella enterica serovar Paratyphi B Genome Sequencing Project"/>
            <person name="McClelland M."/>
            <person name="Sanderson E.K."/>
            <person name="Porwollik S."/>
            <person name="Spieth J."/>
            <person name="Clifton W.S."/>
            <person name="Fulton R."/>
            <person name="Cordes M."/>
            <person name="Wollam A."/>
            <person name="Shah N."/>
            <person name="Pepin K."/>
            <person name="Bhonagiri V."/>
            <person name="Nash W."/>
            <person name="Johnson M."/>
            <person name="Thiruvilangam P."/>
            <person name="Wilson R."/>
        </authorList>
    </citation>
    <scope>NUCLEOTIDE SEQUENCE [LARGE SCALE GENOMIC DNA]</scope>
    <source>
        <strain>ATCC BAA-1250 / SPB7</strain>
    </source>
</reference>
<organism>
    <name type="scientific">Salmonella paratyphi B (strain ATCC BAA-1250 / SPB7)</name>
    <dbReference type="NCBI Taxonomy" id="1016998"/>
    <lineage>
        <taxon>Bacteria</taxon>
        <taxon>Pseudomonadati</taxon>
        <taxon>Pseudomonadota</taxon>
        <taxon>Gammaproteobacteria</taxon>
        <taxon>Enterobacterales</taxon>
        <taxon>Enterobacteriaceae</taxon>
        <taxon>Salmonella</taxon>
    </lineage>
</organism>
<keyword id="KW-0004">4Fe-4S</keyword>
<keyword id="KW-0963">Cytoplasm</keyword>
<keyword id="KW-0408">Iron</keyword>
<keyword id="KW-0411">Iron-sulfur</keyword>
<keyword id="KW-0479">Metal-binding</keyword>
<keyword id="KW-0949">S-adenosyl-L-methionine</keyword>
<keyword id="KW-0808">Transferase</keyword>
<accession>A9MSQ9</accession>
<evidence type="ECO:0000255" key="1">
    <source>
        <dbReference type="HAMAP-Rule" id="MF_01865"/>
    </source>
</evidence>
<evidence type="ECO:0000255" key="2">
    <source>
        <dbReference type="PROSITE-ProRule" id="PRU01266"/>
    </source>
</evidence>
<dbReference type="EC" id="2.8.4.4" evidence="1"/>
<dbReference type="EMBL" id="CP000886">
    <property type="protein sequence ID" value="ABX68023.1"/>
    <property type="molecule type" value="Genomic_DNA"/>
</dbReference>
<dbReference type="RefSeq" id="WP_000073305.1">
    <property type="nucleotide sequence ID" value="NC_010102.1"/>
</dbReference>
<dbReference type="SMR" id="A9MSQ9"/>
<dbReference type="KEGG" id="spq:SPAB_02645"/>
<dbReference type="PATRIC" id="fig|1016998.12.peg.2503"/>
<dbReference type="HOGENOM" id="CLU_018697_0_0_6"/>
<dbReference type="BioCyc" id="SENT1016998:SPAB_RS10760-MONOMER"/>
<dbReference type="Proteomes" id="UP000008556">
    <property type="component" value="Chromosome"/>
</dbReference>
<dbReference type="GO" id="GO:0005829">
    <property type="term" value="C:cytosol"/>
    <property type="evidence" value="ECO:0007669"/>
    <property type="project" value="TreeGrafter"/>
</dbReference>
<dbReference type="GO" id="GO:0051539">
    <property type="term" value="F:4 iron, 4 sulfur cluster binding"/>
    <property type="evidence" value="ECO:0007669"/>
    <property type="project" value="UniProtKB-UniRule"/>
</dbReference>
<dbReference type="GO" id="GO:0035599">
    <property type="term" value="F:aspartic acid methylthiotransferase activity"/>
    <property type="evidence" value="ECO:0007669"/>
    <property type="project" value="TreeGrafter"/>
</dbReference>
<dbReference type="GO" id="GO:0046872">
    <property type="term" value="F:metal ion binding"/>
    <property type="evidence" value="ECO:0007669"/>
    <property type="project" value="UniProtKB-KW"/>
</dbReference>
<dbReference type="GO" id="GO:0103039">
    <property type="term" value="F:protein methylthiotransferase activity"/>
    <property type="evidence" value="ECO:0007669"/>
    <property type="project" value="UniProtKB-EC"/>
</dbReference>
<dbReference type="GO" id="GO:0006400">
    <property type="term" value="P:tRNA modification"/>
    <property type="evidence" value="ECO:0007669"/>
    <property type="project" value="InterPro"/>
</dbReference>
<dbReference type="CDD" id="cd01335">
    <property type="entry name" value="Radical_SAM"/>
    <property type="match status" value="1"/>
</dbReference>
<dbReference type="FunFam" id="2.40.50.140:FF:000060">
    <property type="entry name" value="Ribosomal protein S12 methylthiotransferase RimO"/>
    <property type="match status" value="1"/>
</dbReference>
<dbReference type="FunFam" id="3.40.50.12160:FF:000002">
    <property type="entry name" value="Ribosomal protein S12 methylthiotransferase RimO"/>
    <property type="match status" value="1"/>
</dbReference>
<dbReference type="FunFam" id="3.80.30.20:FF:000001">
    <property type="entry name" value="tRNA-2-methylthio-N(6)-dimethylallyladenosine synthase 2"/>
    <property type="match status" value="1"/>
</dbReference>
<dbReference type="Gene3D" id="3.40.50.12160">
    <property type="entry name" value="Methylthiotransferase, N-terminal domain"/>
    <property type="match status" value="1"/>
</dbReference>
<dbReference type="Gene3D" id="2.40.50.140">
    <property type="entry name" value="Nucleic acid-binding proteins"/>
    <property type="match status" value="1"/>
</dbReference>
<dbReference type="Gene3D" id="3.80.30.20">
    <property type="entry name" value="tm_1862 like domain"/>
    <property type="match status" value="1"/>
</dbReference>
<dbReference type="HAMAP" id="MF_01865">
    <property type="entry name" value="MTTase_RimO"/>
    <property type="match status" value="1"/>
</dbReference>
<dbReference type="InterPro" id="IPR006638">
    <property type="entry name" value="Elp3/MiaA/NifB-like_rSAM"/>
</dbReference>
<dbReference type="InterPro" id="IPR005839">
    <property type="entry name" value="Methylthiotransferase"/>
</dbReference>
<dbReference type="InterPro" id="IPR020612">
    <property type="entry name" value="Methylthiotransferase_CS"/>
</dbReference>
<dbReference type="InterPro" id="IPR013848">
    <property type="entry name" value="Methylthiotransferase_N"/>
</dbReference>
<dbReference type="InterPro" id="IPR038135">
    <property type="entry name" value="Methylthiotransferase_N_sf"/>
</dbReference>
<dbReference type="InterPro" id="IPR012340">
    <property type="entry name" value="NA-bd_OB-fold"/>
</dbReference>
<dbReference type="InterPro" id="IPR005840">
    <property type="entry name" value="Ribosomal_uS12_MeSTrfase_RimO"/>
</dbReference>
<dbReference type="InterPro" id="IPR007197">
    <property type="entry name" value="rSAM"/>
</dbReference>
<dbReference type="InterPro" id="IPR023404">
    <property type="entry name" value="rSAM_horseshoe"/>
</dbReference>
<dbReference type="InterPro" id="IPR002792">
    <property type="entry name" value="TRAM_dom"/>
</dbReference>
<dbReference type="NCBIfam" id="TIGR01125">
    <property type="entry name" value="30S ribosomal protein S12 methylthiotransferase RimO"/>
    <property type="match status" value="1"/>
</dbReference>
<dbReference type="NCBIfam" id="TIGR00089">
    <property type="entry name" value="MiaB/RimO family radical SAM methylthiotransferase"/>
    <property type="match status" value="1"/>
</dbReference>
<dbReference type="PANTHER" id="PTHR43837">
    <property type="entry name" value="RIBOSOMAL PROTEIN S12 METHYLTHIOTRANSFERASE RIMO"/>
    <property type="match status" value="1"/>
</dbReference>
<dbReference type="PANTHER" id="PTHR43837:SF1">
    <property type="entry name" value="RIBOSOMAL PROTEIN US12 METHYLTHIOTRANSFERASE RIMO"/>
    <property type="match status" value="1"/>
</dbReference>
<dbReference type="Pfam" id="PF04055">
    <property type="entry name" value="Radical_SAM"/>
    <property type="match status" value="1"/>
</dbReference>
<dbReference type="Pfam" id="PF18693">
    <property type="entry name" value="TRAM_2"/>
    <property type="match status" value="1"/>
</dbReference>
<dbReference type="Pfam" id="PF00919">
    <property type="entry name" value="UPF0004"/>
    <property type="match status" value="1"/>
</dbReference>
<dbReference type="SFLD" id="SFLDG01082">
    <property type="entry name" value="B12-binding_domain_containing"/>
    <property type="match status" value="1"/>
</dbReference>
<dbReference type="SFLD" id="SFLDS00029">
    <property type="entry name" value="Radical_SAM"/>
    <property type="match status" value="1"/>
</dbReference>
<dbReference type="SFLD" id="SFLDF00274">
    <property type="entry name" value="ribosomal_protein_S12_methylth"/>
    <property type="match status" value="1"/>
</dbReference>
<dbReference type="SMART" id="SM00729">
    <property type="entry name" value="Elp3"/>
    <property type="match status" value="1"/>
</dbReference>
<dbReference type="SUPFAM" id="SSF102114">
    <property type="entry name" value="Radical SAM enzymes"/>
    <property type="match status" value="1"/>
</dbReference>
<dbReference type="PROSITE" id="PS51449">
    <property type="entry name" value="MTTASE_N"/>
    <property type="match status" value="1"/>
</dbReference>
<dbReference type="PROSITE" id="PS01278">
    <property type="entry name" value="MTTASE_RADICAL"/>
    <property type="match status" value="1"/>
</dbReference>
<dbReference type="PROSITE" id="PS51918">
    <property type="entry name" value="RADICAL_SAM"/>
    <property type="match status" value="1"/>
</dbReference>
<dbReference type="PROSITE" id="PS50926">
    <property type="entry name" value="TRAM"/>
    <property type="match status" value="1"/>
</dbReference>